<keyword id="KW-0001">2Fe-2S</keyword>
<keyword id="KW-0963">Cytoplasm</keyword>
<keyword id="KW-0408">Iron</keyword>
<keyword id="KW-0411">Iron-sulfur</keyword>
<keyword id="KW-0479">Metal-binding</keyword>
<keyword id="KW-0663">Pyridoxal phosphate</keyword>
<keyword id="KW-0808">Transferase</keyword>
<sequence>MTVKTPVYLDYAATTPVDKRVAEKMIPYLTETFGNPASNSHAFGWEAEEAVEKARADIAALINADPKEIVFTSGATESDNLAIKGAANFYKTKGKHLITVKTEHKAVLDTMRELERQGFEVTYLGVQENGLIDLEELKAAIRDDTILISVMWANNEIGVVQDIPAIGEICRERKIVFHVDAAQACGKVPVDVEAAKIDLLSMSAHKVYGPKGIGALYVRRKPRVRLEAQMHGGGHERGFRSGTLPTHQIVGMGEAFRIAKEELEQDMAHYRKLRDIFLKGIEGIEEVYINGDLEHRAPNNLNVSFNFVEGESLIMAVKELAVSSGSACTSASLEPSYVLRALGRNDELAHSSLRITFGRMTTEEEVQFAAELIKSKIGKLRELSPLWEMFKDGIDLNSIEWAAH</sequence>
<protein>
    <recommendedName>
        <fullName evidence="1">Cysteine desulfurase IscS</fullName>
        <ecNumber evidence="1">2.8.1.7</ecNumber>
    </recommendedName>
</protein>
<proteinExistence type="inferred from homology"/>
<dbReference type="EC" id="2.8.1.7" evidence="1"/>
<dbReference type="EMBL" id="AM421808">
    <property type="protein sequence ID" value="CAM10544.1"/>
    <property type="molecule type" value="Genomic_DNA"/>
</dbReference>
<dbReference type="RefSeq" id="WP_002220813.1">
    <property type="nucleotide sequence ID" value="NC_008767.1"/>
</dbReference>
<dbReference type="SMR" id="A1KUK1"/>
<dbReference type="KEGG" id="nmc:NMC1315"/>
<dbReference type="HOGENOM" id="CLU_003433_0_2_4"/>
<dbReference type="UniPathway" id="UPA00266"/>
<dbReference type="Proteomes" id="UP000002286">
    <property type="component" value="Chromosome"/>
</dbReference>
<dbReference type="GO" id="GO:1990221">
    <property type="term" value="C:L-cysteine desulfurase complex"/>
    <property type="evidence" value="ECO:0007669"/>
    <property type="project" value="UniProtKB-ARBA"/>
</dbReference>
<dbReference type="GO" id="GO:0051537">
    <property type="term" value="F:2 iron, 2 sulfur cluster binding"/>
    <property type="evidence" value="ECO:0007669"/>
    <property type="project" value="UniProtKB-UniRule"/>
</dbReference>
<dbReference type="GO" id="GO:0031071">
    <property type="term" value="F:cysteine desulfurase activity"/>
    <property type="evidence" value="ECO:0007669"/>
    <property type="project" value="UniProtKB-UniRule"/>
</dbReference>
<dbReference type="GO" id="GO:0046872">
    <property type="term" value="F:metal ion binding"/>
    <property type="evidence" value="ECO:0007669"/>
    <property type="project" value="UniProtKB-KW"/>
</dbReference>
<dbReference type="GO" id="GO:0030170">
    <property type="term" value="F:pyridoxal phosphate binding"/>
    <property type="evidence" value="ECO:0007669"/>
    <property type="project" value="UniProtKB-UniRule"/>
</dbReference>
<dbReference type="GO" id="GO:0044571">
    <property type="term" value="P:[2Fe-2S] cluster assembly"/>
    <property type="evidence" value="ECO:0007669"/>
    <property type="project" value="UniProtKB-UniRule"/>
</dbReference>
<dbReference type="FunFam" id="3.40.640.10:FF:000003">
    <property type="entry name" value="Cysteine desulfurase IscS"/>
    <property type="match status" value="1"/>
</dbReference>
<dbReference type="FunFam" id="3.90.1150.10:FF:000002">
    <property type="entry name" value="Cysteine desulfurase IscS"/>
    <property type="match status" value="1"/>
</dbReference>
<dbReference type="Gene3D" id="3.90.1150.10">
    <property type="entry name" value="Aspartate Aminotransferase, domain 1"/>
    <property type="match status" value="1"/>
</dbReference>
<dbReference type="Gene3D" id="3.40.640.10">
    <property type="entry name" value="Type I PLP-dependent aspartate aminotransferase-like (Major domain)"/>
    <property type="match status" value="1"/>
</dbReference>
<dbReference type="HAMAP" id="MF_00331">
    <property type="entry name" value="Cys_desulf_IscS"/>
    <property type="match status" value="1"/>
</dbReference>
<dbReference type="InterPro" id="IPR000192">
    <property type="entry name" value="Aminotrans_V_dom"/>
</dbReference>
<dbReference type="InterPro" id="IPR020578">
    <property type="entry name" value="Aminotrans_V_PyrdxlP_BS"/>
</dbReference>
<dbReference type="InterPro" id="IPR010240">
    <property type="entry name" value="Cys_deSase_IscS"/>
</dbReference>
<dbReference type="InterPro" id="IPR016454">
    <property type="entry name" value="Cysteine_dSase"/>
</dbReference>
<dbReference type="InterPro" id="IPR015424">
    <property type="entry name" value="PyrdxlP-dep_Trfase"/>
</dbReference>
<dbReference type="InterPro" id="IPR015421">
    <property type="entry name" value="PyrdxlP-dep_Trfase_major"/>
</dbReference>
<dbReference type="InterPro" id="IPR015422">
    <property type="entry name" value="PyrdxlP-dep_Trfase_small"/>
</dbReference>
<dbReference type="NCBIfam" id="TIGR02006">
    <property type="entry name" value="IscS"/>
    <property type="match status" value="1"/>
</dbReference>
<dbReference type="NCBIfam" id="NF010611">
    <property type="entry name" value="PRK14012.1"/>
    <property type="match status" value="1"/>
</dbReference>
<dbReference type="PANTHER" id="PTHR11601:SF34">
    <property type="entry name" value="CYSTEINE DESULFURASE"/>
    <property type="match status" value="1"/>
</dbReference>
<dbReference type="PANTHER" id="PTHR11601">
    <property type="entry name" value="CYSTEINE DESULFURYLASE FAMILY MEMBER"/>
    <property type="match status" value="1"/>
</dbReference>
<dbReference type="Pfam" id="PF00266">
    <property type="entry name" value="Aminotran_5"/>
    <property type="match status" value="1"/>
</dbReference>
<dbReference type="PIRSF" id="PIRSF005572">
    <property type="entry name" value="NifS"/>
    <property type="match status" value="1"/>
</dbReference>
<dbReference type="SUPFAM" id="SSF53383">
    <property type="entry name" value="PLP-dependent transferases"/>
    <property type="match status" value="1"/>
</dbReference>
<dbReference type="PROSITE" id="PS00595">
    <property type="entry name" value="AA_TRANSFER_CLASS_5"/>
    <property type="match status" value="1"/>
</dbReference>
<gene>
    <name evidence="1" type="primary">iscS</name>
    <name type="ordered locus">NMC1315</name>
</gene>
<comment type="function">
    <text evidence="1">Master enzyme that delivers sulfur to a number of partners involved in Fe-S cluster assembly, tRNA modification or cofactor biosynthesis. Catalyzes the removal of elemental sulfur atoms from cysteine to produce alanine. Functions as a sulfur delivery protein for Fe-S cluster synthesis onto IscU, an Fe-S scaffold assembly protein, as well as other S acceptor proteins.</text>
</comment>
<comment type="catalytic activity">
    <reaction evidence="1">
        <text>(sulfur carrier)-H + L-cysteine = (sulfur carrier)-SH + L-alanine</text>
        <dbReference type="Rhea" id="RHEA:43892"/>
        <dbReference type="Rhea" id="RHEA-COMP:14737"/>
        <dbReference type="Rhea" id="RHEA-COMP:14739"/>
        <dbReference type="ChEBI" id="CHEBI:29917"/>
        <dbReference type="ChEBI" id="CHEBI:35235"/>
        <dbReference type="ChEBI" id="CHEBI:57972"/>
        <dbReference type="ChEBI" id="CHEBI:64428"/>
        <dbReference type="EC" id="2.8.1.7"/>
    </reaction>
</comment>
<comment type="cofactor">
    <cofactor evidence="1">
        <name>pyridoxal 5'-phosphate</name>
        <dbReference type="ChEBI" id="CHEBI:597326"/>
    </cofactor>
</comment>
<comment type="pathway">
    <text evidence="1">Cofactor biosynthesis; iron-sulfur cluster biosynthesis.</text>
</comment>
<comment type="subunit">
    <text evidence="1">Homodimer. Forms a heterotetramer with IscU, interacts with other sulfur acceptors.</text>
</comment>
<comment type="subcellular location">
    <subcellularLocation>
        <location evidence="1">Cytoplasm</location>
    </subcellularLocation>
</comment>
<comment type="similarity">
    <text evidence="1">Belongs to the class-V pyridoxal-phosphate-dependent aminotransferase family. NifS/IscS subfamily.</text>
</comment>
<name>ISCS_NEIMF</name>
<evidence type="ECO:0000255" key="1">
    <source>
        <dbReference type="HAMAP-Rule" id="MF_00331"/>
    </source>
</evidence>
<feature type="chain" id="PRO_1000019418" description="Cysteine desulfurase IscS">
    <location>
        <begin position="1"/>
        <end position="404"/>
    </location>
</feature>
<feature type="active site" description="Cysteine persulfide intermediate" evidence="1">
    <location>
        <position position="328"/>
    </location>
</feature>
<feature type="binding site" evidence="1">
    <location>
        <begin position="75"/>
        <end position="76"/>
    </location>
    <ligand>
        <name>pyridoxal 5'-phosphate</name>
        <dbReference type="ChEBI" id="CHEBI:597326"/>
    </ligand>
</feature>
<feature type="binding site" evidence="1">
    <location>
        <position position="155"/>
    </location>
    <ligand>
        <name>pyridoxal 5'-phosphate</name>
        <dbReference type="ChEBI" id="CHEBI:597326"/>
    </ligand>
</feature>
<feature type="binding site" evidence="1">
    <location>
        <position position="183"/>
    </location>
    <ligand>
        <name>pyridoxal 5'-phosphate</name>
        <dbReference type="ChEBI" id="CHEBI:597326"/>
    </ligand>
</feature>
<feature type="binding site" evidence="1">
    <location>
        <begin position="203"/>
        <end position="205"/>
    </location>
    <ligand>
        <name>pyridoxal 5'-phosphate</name>
        <dbReference type="ChEBI" id="CHEBI:597326"/>
    </ligand>
</feature>
<feature type="binding site" evidence="1">
    <location>
        <position position="243"/>
    </location>
    <ligand>
        <name>pyridoxal 5'-phosphate</name>
        <dbReference type="ChEBI" id="CHEBI:597326"/>
    </ligand>
</feature>
<feature type="binding site" description="via persulfide group" evidence="1">
    <location>
        <position position="328"/>
    </location>
    <ligand>
        <name>[2Fe-2S] cluster</name>
        <dbReference type="ChEBI" id="CHEBI:190135"/>
        <note>ligand shared with IscU</note>
    </ligand>
</feature>
<feature type="modified residue" description="N6-(pyridoxal phosphate)lysine" evidence="1">
    <location>
        <position position="206"/>
    </location>
</feature>
<reference key="1">
    <citation type="journal article" date="2007" name="PLoS Genet.">
        <title>Meningococcal genetic variation mechanisms viewed through comparative analysis of serogroup C strain FAM18.</title>
        <authorList>
            <person name="Bentley S.D."/>
            <person name="Vernikos G.S."/>
            <person name="Snyder L.A.S."/>
            <person name="Churcher C."/>
            <person name="Arrowsmith C."/>
            <person name="Chillingworth T."/>
            <person name="Cronin A."/>
            <person name="Davis P.H."/>
            <person name="Holroyd N.E."/>
            <person name="Jagels K."/>
            <person name="Maddison M."/>
            <person name="Moule S."/>
            <person name="Rabbinowitsch E."/>
            <person name="Sharp S."/>
            <person name="Unwin L."/>
            <person name="Whitehead S."/>
            <person name="Quail M.A."/>
            <person name="Achtman M."/>
            <person name="Barrell B.G."/>
            <person name="Saunders N.J."/>
            <person name="Parkhill J."/>
        </authorList>
    </citation>
    <scope>NUCLEOTIDE SEQUENCE [LARGE SCALE GENOMIC DNA]</scope>
    <source>
        <strain>ATCC 700532 / DSM 15464 / FAM18</strain>
    </source>
</reference>
<accession>A1KUK1</accession>
<organism>
    <name type="scientific">Neisseria meningitidis serogroup C / serotype 2a (strain ATCC 700532 / DSM 15464 / FAM18)</name>
    <dbReference type="NCBI Taxonomy" id="272831"/>
    <lineage>
        <taxon>Bacteria</taxon>
        <taxon>Pseudomonadati</taxon>
        <taxon>Pseudomonadota</taxon>
        <taxon>Betaproteobacteria</taxon>
        <taxon>Neisseriales</taxon>
        <taxon>Neisseriaceae</taxon>
        <taxon>Neisseria</taxon>
    </lineage>
</organism>